<name>LIGB_SHIFL</name>
<dbReference type="EC" id="6.5.1.2" evidence="1"/>
<dbReference type="EMBL" id="AE005674">
    <property type="protein sequence ID" value="AAN45133.2"/>
    <property type="molecule type" value="Genomic_DNA"/>
</dbReference>
<dbReference type="EMBL" id="AE014073">
    <property type="protein sequence ID" value="AAP19059.1"/>
    <property type="molecule type" value="Genomic_DNA"/>
</dbReference>
<dbReference type="RefSeq" id="NP_709426.2">
    <property type="nucleotide sequence ID" value="NC_004337.2"/>
</dbReference>
<dbReference type="RefSeq" id="WP_005093444.1">
    <property type="nucleotide sequence ID" value="NZ_WPGW01000042.1"/>
</dbReference>
<dbReference type="SMR" id="Q83PM9"/>
<dbReference type="STRING" id="198214.SF3686"/>
<dbReference type="PaxDb" id="198214-SF3686"/>
<dbReference type="GeneID" id="1024283"/>
<dbReference type="KEGG" id="sfl:SF3686"/>
<dbReference type="KEGG" id="sfx:S4082"/>
<dbReference type="PATRIC" id="fig|198214.7.peg.4350"/>
<dbReference type="HOGENOM" id="CLU_489786_0_0_6"/>
<dbReference type="Proteomes" id="UP000001006">
    <property type="component" value="Chromosome"/>
</dbReference>
<dbReference type="Proteomes" id="UP000002673">
    <property type="component" value="Chromosome"/>
</dbReference>
<dbReference type="GO" id="GO:0003911">
    <property type="term" value="F:DNA ligase (NAD+) activity"/>
    <property type="evidence" value="ECO:0007669"/>
    <property type="project" value="UniProtKB-UniRule"/>
</dbReference>
<dbReference type="GO" id="GO:0006281">
    <property type="term" value="P:DNA repair"/>
    <property type="evidence" value="ECO:0007669"/>
    <property type="project" value="UniProtKB-KW"/>
</dbReference>
<dbReference type="GO" id="GO:0006260">
    <property type="term" value="P:DNA replication"/>
    <property type="evidence" value="ECO:0007669"/>
    <property type="project" value="UniProtKB-KW"/>
</dbReference>
<dbReference type="FunFam" id="1.10.287.610:FF:000003">
    <property type="entry name" value="DNA ligase B"/>
    <property type="match status" value="1"/>
</dbReference>
<dbReference type="FunFam" id="2.40.50.140:FF:000139">
    <property type="entry name" value="DNA ligase B"/>
    <property type="match status" value="1"/>
</dbReference>
<dbReference type="FunFam" id="3.30.470.30:FF:000007">
    <property type="entry name" value="DNA ligase B"/>
    <property type="match status" value="1"/>
</dbReference>
<dbReference type="Gene3D" id="3.30.470.30">
    <property type="entry name" value="DNA ligase/mRNA capping enzyme"/>
    <property type="match status" value="1"/>
</dbReference>
<dbReference type="Gene3D" id="1.10.287.610">
    <property type="entry name" value="Helix hairpin bin"/>
    <property type="match status" value="1"/>
</dbReference>
<dbReference type="Gene3D" id="2.40.50.140">
    <property type="entry name" value="Nucleic acid-binding proteins"/>
    <property type="match status" value="1"/>
</dbReference>
<dbReference type="HAMAP" id="MF_01587">
    <property type="entry name" value="DNA_ligase_B"/>
    <property type="match status" value="1"/>
</dbReference>
<dbReference type="InterPro" id="IPR018239">
    <property type="entry name" value="DNA_ligase_AS"/>
</dbReference>
<dbReference type="InterPro" id="IPR020923">
    <property type="entry name" value="DNA_ligase_B"/>
</dbReference>
<dbReference type="InterPro" id="IPR033136">
    <property type="entry name" value="DNA_ligase_CS"/>
</dbReference>
<dbReference type="InterPro" id="IPR013839">
    <property type="entry name" value="DNAligase_adenylation"/>
</dbReference>
<dbReference type="InterPro" id="IPR013840">
    <property type="entry name" value="DNAligase_N"/>
</dbReference>
<dbReference type="InterPro" id="IPR012340">
    <property type="entry name" value="NA-bd_OB-fold"/>
</dbReference>
<dbReference type="InterPro" id="IPR050326">
    <property type="entry name" value="NAD_dep_DNA_ligaseB"/>
</dbReference>
<dbReference type="InterPro" id="IPR004150">
    <property type="entry name" value="NAD_DNA_ligase_OB"/>
</dbReference>
<dbReference type="InterPro" id="IPR010994">
    <property type="entry name" value="RuvA_2-like"/>
</dbReference>
<dbReference type="NCBIfam" id="NF005987">
    <property type="entry name" value="PRK08097.1"/>
    <property type="match status" value="1"/>
</dbReference>
<dbReference type="PANTHER" id="PTHR47810">
    <property type="entry name" value="DNA LIGASE"/>
    <property type="match status" value="1"/>
</dbReference>
<dbReference type="PANTHER" id="PTHR47810:SF1">
    <property type="entry name" value="DNA LIGASE B"/>
    <property type="match status" value="1"/>
</dbReference>
<dbReference type="Pfam" id="PF01653">
    <property type="entry name" value="DNA_ligase_aden"/>
    <property type="match status" value="1"/>
</dbReference>
<dbReference type="Pfam" id="PF03120">
    <property type="entry name" value="DNA_ligase_OB"/>
    <property type="match status" value="1"/>
</dbReference>
<dbReference type="SMART" id="SM00532">
    <property type="entry name" value="LIGANc"/>
    <property type="match status" value="1"/>
</dbReference>
<dbReference type="SUPFAM" id="SSF56091">
    <property type="entry name" value="DNA ligase/mRNA capping enzyme, catalytic domain"/>
    <property type="match status" value="1"/>
</dbReference>
<dbReference type="SUPFAM" id="SSF50249">
    <property type="entry name" value="Nucleic acid-binding proteins"/>
    <property type="match status" value="1"/>
</dbReference>
<dbReference type="SUPFAM" id="SSF47781">
    <property type="entry name" value="RuvA domain 2-like"/>
    <property type="match status" value="1"/>
</dbReference>
<dbReference type="PROSITE" id="PS01055">
    <property type="entry name" value="DNA_LIGASE_N1"/>
    <property type="match status" value="1"/>
</dbReference>
<dbReference type="PROSITE" id="PS01056">
    <property type="entry name" value="DNA_LIGASE_N2"/>
    <property type="match status" value="1"/>
</dbReference>
<sequence length="560" mass="63261">MKVWMAILISILCWQSSVWAVCPAWSPARAQEEISRLQQQIKQWDDDYWKEGKSEVEDGVYDQLSARLTQWQRCFVSEPRDVMMPPLNGAVMHPVAHTGVRKMADKNALSLWMRERSDLWVQPKVDGVAVTLVYRDGKLNKAISRGNGLKGEDWTQKVSLISAVLQTVSGPLANSTLQGEIFLQREGHIQQQMGGINARAKVAGLMMRQGNSDTLNSLAVFVWAWPDGPQLMTDRLKELATAGFTLTQRYTRAVKNADEVARVRNEWWKAKLPFVTDGVVVRGAKEPESRHWLPGQAEWLVAWKYQPVAQVAEVKAIQFAVGKSGKISVVASLAPVMLDDKKVQRVNIGSVRRWQEWDIAPGDQILVSLAGQGIPRIDDVVWRGAERTKPTPPENRFNPLTCYFASDVCQEQFISRLVWLGSKQVLGLDGIGEAGWRALHQTHRFEHIFSWLLLTPEQLQNTPGIAKSKSAQLWHQFNLARNQPFTRWVMAMGIPLTRAALNASDERSWSQLLFSTEQFWQQLPGTGSGRARQVIEWKENAQIKKLGSWLAAQQITGFEP</sequence>
<protein>
    <recommendedName>
        <fullName evidence="1">DNA ligase B</fullName>
        <ecNumber evidence="1">6.5.1.2</ecNumber>
    </recommendedName>
    <alternativeName>
        <fullName evidence="1">Polydeoxyribonucleotide synthase [NAD(+)] B</fullName>
    </alternativeName>
</protein>
<evidence type="ECO:0000255" key="1">
    <source>
        <dbReference type="HAMAP-Rule" id="MF_01587"/>
    </source>
</evidence>
<gene>
    <name evidence="1" type="primary">ligB</name>
    <name type="ordered locus">SF3686</name>
    <name type="ordered locus">S4082</name>
</gene>
<comment type="function">
    <text evidence="1">Catalyzes the formation of phosphodiester linkages between 5'-phosphoryl and 3'-hydroxyl groups in double-stranded DNA using NAD as a coenzyme and as the energy source for the reaction.</text>
</comment>
<comment type="catalytic activity">
    <reaction evidence="1">
        <text>NAD(+) + (deoxyribonucleotide)n-3'-hydroxyl + 5'-phospho-(deoxyribonucleotide)m = (deoxyribonucleotide)n+m + AMP + beta-nicotinamide D-nucleotide.</text>
        <dbReference type="EC" id="6.5.1.2"/>
    </reaction>
</comment>
<comment type="similarity">
    <text evidence="1">Belongs to the NAD-dependent DNA ligase family. LigB subfamily.</text>
</comment>
<reference key="1">
    <citation type="journal article" date="2002" name="Nucleic Acids Res.">
        <title>Genome sequence of Shigella flexneri 2a: insights into pathogenicity through comparison with genomes of Escherichia coli K12 and O157.</title>
        <authorList>
            <person name="Jin Q."/>
            <person name="Yuan Z."/>
            <person name="Xu J."/>
            <person name="Wang Y."/>
            <person name="Shen Y."/>
            <person name="Lu W."/>
            <person name="Wang J."/>
            <person name="Liu H."/>
            <person name="Yang J."/>
            <person name="Yang F."/>
            <person name="Zhang X."/>
            <person name="Zhang J."/>
            <person name="Yang G."/>
            <person name="Wu H."/>
            <person name="Qu D."/>
            <person name="Dong J."/>
            <person name="Sun L."/>
            <person name="Xue Y."/>
            <person name="Zhao A."/>
            <person name="Gao Y."/>
            <person name="Zhu J."/>
            <person name="Kan B."/>
            <person name="Ding K."/>
            <person name="Chen S."/>
            <person name="Cheng H."/>
            <person name="Yao Z."/>
            <person name="He B."/>
            <person name="Chen R."/>
            <person name="Ma D."/>
            <person name="Qiang B."/>
            <person name="Wen Y."/>
            <person name="Hou Y."/>
            <person name="Yu J."/>
        </authorList>
    </citation>
    <scope>NUCLEOTIDE SEQUENCE [LARGE SCALE GENOMIC DNA]</scope>
    <source>
        <strain>301 / Serotype 2a</strain>
    </source>
</reference>
<reference key="2">
    <citation type="journal article" date="2003" name="Infect. Immun.">
        <title>Complete genome sequence and comparative genomics of Shigella flexneri serotype 2a strain 2457T.</title>
        <authorList>
            <person name="Wei J."/>
            <person name="Goldberg M.B."/>
            <person name="Burland V."/>
            <person name="Venkatesan M.M."/>
            <person name="Deng W."/>
            <person name="Fournier G."/>
            <person name="Mayhew G.F."/>
            <person name="Plunkett G. III"/>
            <person name="Rose D.J."/>
            <person name="Darling A."/>
            <person name="Mau B."/>
            <person name="Perna N.T."/>
            <person name="Payne S.M."/>
            <person name="Runyen-Janecky L.J."/>
            <person name="Zhou S."/>
            <person name="Schwartz D.C."/>
            <person name="Blattner F.R."/>
        </authorList>
    </citation>
    <scope>NUCLEOTIDE SEQUENCE [LARGE SCALE GENOMIC DNA]</scope>
    <source>
        <strain>ATCC 700930 / 2457T / Serotype 2a</strain>
    </source>
</reference>
<accession>Q83PM9</accession>
<accession>Q7UB00</accession>
<feature type="chain" id="PRO_0000313554" description="DNA ligase B">
    <location>
        <begin position="1"/>
        <end position="560"/>
    </location>
</feature>
<feature type="active site" description="N6-AMP-lysine intermediate" evidence="1">
    <location>
        <position position="124"/>
    </location>
</feature>
<proteinExistence type="inferred from homology"/>
<organism>
    <name type="scientific">Shigella flexneri</name>
    <dbReference type="NCBI Taxonomy" id="623"/>
    <lineage>
        <taxon>Bacteria</taxon>
        <taxon>Pseudomonadati</taxon>
        <taxon>Pseudomonadota</taxon>
        <taxon>Gammaproteobacteria</taxon>
        <taxon>Enterobacterales</taxon>
        <taxon>Enterobacteriaceae</taxon>
        <taxon>Shigella</taxon>
    </lineage>
</organism>
<keyword id="KW-0227">DNA damage</keyword>
<keyword id="KW-0234">DNA repair</keyword>
<keyword id="KW-0235">DNA replication</keyword>
<keyword id="KW-0436">Ligase</keyword>
<keyword id="KW-0520">NAD</keyword>
<keyword id="KW-1185">Reference proteome</keyword>